<gene>
    <name evidence="1" type="primary">nop10</name>
    <name type="ordered locus">LS215_1265</name>
</gene>
<reference key="1">
    <citation type="journal article" date="2009" name="Proc. Natl. Acad. Sci. U.S.A.">
        <title>Biogeography of the Sulfolobus islandicus pan-genome.</title>
        <authorList>
            <person name="Reno M.L."/>
            <person name="Held N.L."/>
            <person name="Fields C.J."/>
            <person name="Burke P.V."/>
            <person name="Whitaker R.J."/>
        </authorList>
    </citation>
    <scope>NUCLEOTIDE SEQUENCE [LARGE SCALE GENOMIC DNA]</scope>
    <source>
        <strain>L.S.2.15 / Lassen #1</strain>
    </source>
</reference>
<protein>
    <recommendedName>
        <fullName evidence="1">Ribosome biogenesis protein Nop10</fullName>
    </recommendedName>
</protein>
<evidence type="ECO:0000255" key="1">
    <source>
        <dbReference type="HAMAP-Rule" id="MF_00803"/>
    </source>
</evidence>
<comment type="function">
    <text evidence="1">Involved in ribosome biogenesis; more specifically in 18S rRNA pseudouridylation and in cleavage of pre-rRNA.</text>
</comment>
<comment type="similarity">
    <text evidence="1">Belongs to the NOP10 family.</text>
</comment>
<keyword id="KW-0687">Ribonucleoprotein</keyword>
<keyword id="KW-0690">Ribosome biogenesis</keyword>
<keyword id="KW-0698">rRNA processing</keyword>
<organism>
    <name type="scientific">Saccharolobus islandicus (strain L.S.2.15 / Lassen #1)</name>
    <name type="common">Sulfolobus islandicus</name>
    <dbReference type="NCBI Taxonomy" id="429572"/>
    <lineage>
        <taxon>Archaea</taxon>
        <taxon>Thermoproteota</taxon>
        <taxon>Thermoprotei</taxon>
        <taxon>Sulfolobales</taxon>
        <taxon>Sulfolobaceae</taxon>
        <taxon>Saccharolobus</taxon>
    </lineage>
</organism>
<feature type="chain" id="PRO_1000212993" description="Ribosome biogenesis protein Nop10">
    <location>
        <begin position="1"/>
        <end position="56"/>
    </location>
</feature>
<proteinExistence type="inferred from homology"/>
<name>NOP10_SACI2</name>
<dbReference type="EMBL" id="CP001399">
    <property type="protein sequence ID" value="ACP35275.1"/>
    <property type="molecule type" value="Genomic_DNA"/>
</dbReference>
<dbReference type="RefSeq" id="WP_012711191.1">
    <property type="nucleotide sequence ID" value="NC_012589.1"/>
</dbReference>
<dbReference type="SMR" id="C3MPG2"/>
<dbReference type="KEGG" id="sis:LS215_1265"/>
<dbReference type="HOGENOM" id="CLU_196480_1_0_2"/>
<dbReference type="OrthoDB" id="7259at2157"/>
<dbReference type="Proteomes" id="UP000001747">
    <property type="component" value="Chromosome"/>
</dbReference>
<dbReference type="GO" id="GO:1990904">
    <property type="term" value="C:ribonucleoprotein complex"/>
    <property type="evidence" value="ECO:0007669"/>
    <property type="project" value="UniProtKB-KW"/>
</dbReference>
<dbReference type="GO" id="GO:0030515">
    <property type="term" value="F:snoRNA binding"/>
    <property type="evidence" value="ECO:0007669"/>
    <property type="project" value="InterPro"/>
</dbReference>
<dbReference type="GO" id="GO:0001522">
    <property type="term" value="P:pseudouridine synthesis"/>
    <property type="evidence" value="ECO:0007669"/>
    <property type="project" value="InterPro"/>
</dbReference>
<dbReference type="GO" id="GO:0006364">
    <property type="term" value="P:rRNA processing"/>
    <property type="evidence" value="ECO:0007669"/>
    <property type="project" value="UniProtKB-UniRule"/>
</dbReference>
<dbReference type="Gene3D" id="2.20.28.40">
    <property type="entry name" value="H/ACA ribonucleoprotein complex, subunit Nop10"/>
    <property type="match status" value="1"/>
</dbReference>
<dbReference type="HAMAP" id="MF_00803">
    <property type="entry name" value="Nop10"/>
    <property type="match status" value="1"/>
</dbReference>
<dbReference type="InterPro" id="IPR007264">
    <property type="entry name" value="H/ACA_rnp_Nop10"/>
</dbReference>
<dbReference type="InterPro" id="IPR036756">
    <property type="entry name" value="H/ACA_rnp_Nop10_sf"/>
</dbReference>
<dbReference type="InterPro" id="IPR023532">
    <property type="entry name" value="Nop10_arc-typ"/>
</dbReference>
<dbReference type="NCBIfam" id="NF009623">
    <property type="entry name" value="PRK13130.1"/>
    <property type="match status" value="1"/>
</dbReference>
<dbReference type="PANTHER" id="PTHR13305:SF0">
    <property type="entry name" value="H_ACA RIBONUCLEOPROTEIN COMPLEX SUBUNIT 3"/>
    <property type="match status" value="1"/>
</dbReference>
<dbReference type="PANTHER" id="PTHR13305">
    <property type="entry name" value="RIBOSOME BIOGENESIS PROTEIN NOP10"/>
    <property type="match status" value="1"/>
</dbReference>
<dbReference type="Pfam" id="PF04135">
    <property type="entry name" value="Nop10p"/>
    <property type="match status" value="1"/>
</dbReference>
<dbReference type="SUPFAM" id="SSF144210">
    <property type="entry name" value="Nop10-like SnoRNP"/>
    <property type="match status" value="1"/>
</dbReference>
<sequence>MKWKMKKCPKDNTYTFKDICPVCGSKTMIPHPSRFSPEDKYVKYRIELKKGVKLNC</sequence>
<accession>C3MPG2</accession>